<proteinExistence type="evidence at protein level"/>
<name>CBIQ_RHOCB</name>
<accession>D5AUZ7</accession>
<accession>O68105</accession>
<sequence length="244" mass="25881">MSIASIDRVAAQGRWRNRPLAEKCLIGLGFLALAVTVPPFPGAVLVTVAILAFTFLGARVPLRFWAAVAVLPLGFLTTGAAVLLIQIGPDGIGLAPQGPAKAAALVMRASAATCCLLFLATTTPAADLLSGLRRWRVPAELIEIALLTYRFVFILAEEAAAMTTAQRARLGHATRRRWLRSTAQVIAALLPRALDRARRLETGLAARNWQGEMRVLSTRPAASPLVLGLILTLQAAILAAGVLL</sequence>
<evidence type="ECO:0000255" key="1"/>
<evidence type="ECO:0000269" key="2">
    <source>
    </source>
</evidence>
<evidence type="ECO:0000269" key="3">
    <source>
    </source>
</evidence>
<evidence type="ECO:0000305" key="4"/>
<evidence type="ECO:0007829" key="5">
    <source>
        <dbReference type="PDB" id="5X3X"/>
    </source>
</evidence>
<gene>
    <name type="primary">cbiQ</name>
    <name type="synonym">cbiQ2</name>
    <name type="ordered locus">RCAP_rcc02035</name>
</gene>
<dbReference type="EMBL" id="AF010496">
    <property type="protein sequence ID" value="AAC16195.1"/>
    <property type="molecule type" value="Genomic_DNA"/>
</dbReference>
<dbReference type="EMBL" id="CP001312">
    <property type="protein sequence ID" value="ADE85779.1"/>
    <property type="molecule type" value="Genomic_DNA"/>
</dbReference>
<dbReference type="PIR" id="T03542">
    <property type="entry name" value="T03542"/>
</dbReference>
<dbReference type="PDB" id="5X3X">
    <property type="method" value="X-ray"/>
    <property type="resolution" value="2.79 A"/>
    <property type="chains" value="Q/q=1-244"/>
</dbReference>
<dbReference type="PDBsum" id="5X3X"/>
<dbReference type="SMR" id="D5AUZ7"/>
<dbReference type="STRING" id="272942.RCAP_rcc02035"/>
<dbReference type="TCDB" id="3.A.1.23.8">
    <property type="family name" value="the atp-binding cassette (abc) superfamily"/>
</dbReference>
<dbReference type="KEGG" id="rcp:RCAP_rcc02035"/>
<dbReference type="eggNOG" id="COG0619">
    <property type="taxonomic scope" value="Bacteria"/>
</dbReference>
<dbReference type="HOGENOM" id="CLU_056469_5_2_5"/>
<dbReference type="OrthoDB" id="7688456at2"/>
<dbReference type="UniPathway" id="UPA00148"/>
<dbReference type="Proteomes" id="UP000002361">
    <property type="component" value="Chromosome"/>
</dbReference>
<dbReference type="GO" id="GO:0043190">
    <property type="term" value="C:ATP-binding cassette (ABC) transporter complex"/>
    <property type="evidence" value="ECO:0000314"/>
    <property type="project" value="UniProtKB"/>
</dbReference>
<dbReference type="GO" id="GO:0009236">
    <property type="term" value="P:cobalamin biosynthetic process"/>
    <property type="evidence" value="ECO:0007669"/>
    <property type="project" value="UniProtKB-UniPathway"/>
</dbReference>
<dbReference type="GO" id="GO:0006824">
    <property type="term" value="P:cobalt ion transport"/>
    <property type="evidence" value="ECO:0000314"/>
    <property type="project" value="UniProtKB"/>
</dbReference>
<dbReference type="CDD" id="cd16914">
    <property type="entry name" value="EcfT"/>
    <property type="match status" value="1"/>
</dbReference>
<dbReference type="InterPro" id="IPR003339">
    <property type="entry name" value="ABC/ECF_trnsptr_transmembrane"/>
</dbReference>
<dbReference type="InterPro" id="IPR052770">
    <property type="entry name" value="Cobalt_transport_CbiQ"/>
</dbReference>
<dbReference type="InterPro" id="IPR012809">
    <property type="entry name" value="ECF_CbiQ"/>
</dbReference>
<dbReference type="NCBIfam" id="TIGR02454">
    <property type="entry name" value="ECF_T_CbiQ"/>
    <property type="match status" value="1"/>
</dbReference>
<dbReference type="PANTHER" id="PTHR43723">
    <property type="entry name" value="COBALT TRANSPORT PROTEIN CBIQ"/>
    <property type="match status" value="1"/>
</dbReference>
<dbReference type="PANTHER" id="PTHR43723:SF1">
    <property type="entry name" value="COBALT TRANSPORT PROTEIN CBIQ"/>
    <property type="match status" value="1"/>
</dbReference>
<dbReference type="Pfam" id="PF02361">
    <property type="entry name" value="CbiQ"/>
    <property type="match status" value="1"/>
</dbReference>
<comment type="function">
    <text evidence="2 3">Part of the energy-coupling factor (ECF) transporter complex CbiMNOQ involved in cobalt import. The complex confers cobalt uptake upon expression in E.coli; can also transport nickel with a very low affinity.</text>
</comment>
<comment type="pathway">
    <text>Cofactor biosynthesis; adenosylcobalamin biosynthesis.</text>
</comment>
<comment type="subunit">
    <text evidence="2 3">Forms an energy-coupling factor (ECF) transporter complex composed of an ATP-binding protein (A component, CbiO), a transmembrane protein (T component, CbiQ) and 2 possible substrate-capture proteins (S components, CbiM and CbiN) of unknown stoichimetry. Subcomplexes composed of CbiMQO can be isolated from membranes but the CbiN subunit is not isolated in association with them, suggesting it is only loosely associated. Expression of just CbiMN in E.coli confers some cobalt uptake.</text>
</comment>
<comment type="subcellular location">
    <subcellularLocation>
        <location evidence="4">Cell inner membrane</location>
        <topology evidence="4">Multi-pass membrane protein</topology>
    </subcellularLocation>
</comment>
<comment type="similarity">
    <text evidence="4">Belongs to the CbiQ family.</text>
</comment>
<organism>
    <name type="scientific">Rhodobacter capsulatus (strain ATCC BAA-309 / NBRC 16581 / SB1003)</name>
    <dbReference type="NCBI Taxonomy" id="272942"/>
    <lineage>
        <taxon>Bacteria</taxon>
        <taxon>Pseudomonadati</taxon>
        <taxon>Pseudomonadota</taxon>
        <taxon>Alphaproteobacteria</taxon>
        <taxon>Rhodobacterales</taxon>
        <taxon>Rhodobacter group</taxon>
        <taxon>Rhodobacter</taxon>
    </lineage>
</organism>
<protein>
    <recommendedName>
        <fullName>Cobalt transport protein CbiQ</fullName>
    </recommendedName>
    <alternativeName>
        <fullName>Energy-coupling factor transporter transmembrane protein CbiQ</fullName>
        <shortName>ECF transporter T component CbiQ</shortName>
    </alternativeName>
</protein>
<feature type="chain" id="PRO_0000411084" description="Cobalt transport protein CbiQ">
    <location>
        <begin position="1"/>
        <end position="244"/>
    </location>
</feature>
<feature type="transmembrane region" description="Helical" evidence="1">
    <location>
        <begin position="26"/>
        <end position="46"/>
    </location>
</feature>
<feature type="transmembrane region" description="Helical" evidence="1">
    <location>
        <begin position="65"/>
        <end position="85"/>
    </location>
</feature>
<feature type="transmembrane region" description="Helical" evidence="1">
    <location>
        <begin position="112"/>
        <end position="132"/>
    </location>
</feature>
<feature type="transmembrane region" description="Helical" evidence="1">
    <location>
        <begin position="141"/>
        <end position="161"/>
    </location>
</feature>
<feature type="transmembrane region" description="Helical" evidence="1">
    <location>
        <begin position="224"/>
        <end position="244"/>
    </location>
</feature>
<feature type="helix" evidence="5">
    <location>
        <begin position="5"/>
        <end position="11"/>
    </location>
</feature>
<feature type="turn" evidence="5">
    <location>
        <begin position="14"/>
        <end position="17"/>
    </location>
</feature>
<feature type="helix" evidence="5">
    <location>
        <begin position="20"/>
        <end position="36"/>
    </location>
</feature>
<feature type="helix" evidence="5">
    <location>
        <begin position="39"/>
        <end position="55"/>
    </location>
</feature>
<feature type="helix" evidence="5">
    <location>
        <begin position="62"/>
        <end position="69"/>
    </location>
</feature>
<feature type="helix" evidence="5">
    <location>
        <begin position="71"/>
        <end position="84"/>
    </location>
</feature>
<feature type="strand" evidence="5">
    <location>
        <begin position="85"/>
        <end position="88"/>
    </location>
</feature>
<feature type="strand" evidence="5">
    <location>
        <begin position="91"/>
        <end position="94"/>
    </location>
</feature>
<feature type="helix" evidence="5">
    <location>
        <begin position="98"/>
        <end position="122"/>
    </location>
</feature>
<feature type="helix" evidence="5">
    <location>
        <begin position="125"/>
        <end position="131"/>
    </location>
</feature>
<feature type="strand" evidence="5">
    <location>
        <begin position="134"/>
        <end position="136"/>
    </location>
</feature>
<feature type="helix" evidence="5">
    <location>
        <begin position="139"/>
        <end position="168"/>
    </location>
</feature>
<feature type="turn" evidence="5">
    <location>
        <begin position="169"/>
        <end position="172"/>
    </location>
</feature>
<feature type="helix" evidence="5">
    <location>
        <begin position="175"/>
        <end position="205"/>
    </location>
</feature>
<feature type="strand" evidence="5">
    <location>
        <begin position="210"/>
        <end position="212"/>
    </location>
</feature>
<feature type="helix" evidence="5">
    <location>
        <begin position="224"/>
        <end position="233"/>
    </location>
</feature>
<feature type="helix" evidence="5">
    <location>
        <begin position="236"/>
        <end position="240"/>
    </location>
</feature>
<reference key="1">
    <citation type="journal article" date="1997" name="Proc. Natl. Acad. Sci. U.S.A.">
        <title>Sequence of a 189-kb segment of the chromosome of Rhodobacter capsulatus SB1003.</title>
        <authorList>
            <person name="Vlcek C."/>
            <person name="Paces V."/>
            <person name="Maltsev N."/>
            <person name="Paces J."/>
            <person name="Haselkorn R."/>
            <person name="Fonstein M."/>
        </authorList>
    </citation>
    <scope>NUCLEOTIDE SEQUENCE [GENOMIC DNA]</scope>
    <source>
        <strain>ATCC BAA-309 / NBRC 16581 / SB1003</strain>
    </source>
</reference>
<reference key="2">
    <citation type="journal article" date="2010" name="J. Bacteriol.">
        <title>Complete genome sequence of the photosynthetic purple nonsulfur bacterium Rhodobacter capsulatus SB 1003.</title>
        <authorList>
            <person name="Strnad H."/>
            <person name="Lapidus A."/>
            <person name="Paces J."/>
            <person name="Ulbrich P."/>
            <person name="Vlcek C."/>
            <person name="Paces V."/>
            <person name="Haselkorn R."/>
        </authorList>
    </citation>
    <scope>NUCLEOTIDE SEQUENCE [LARGE SCALE GENOMIC DNA]</scope>
    <source>
        <strain>ATCC BAA-309 / NBRC 16581 / SB1003</strain>
    </source>
</reference>
<reference key="3">
    <citation type="journal article" date="2006" name="J. Bacteriol.">
        <title>Comparative and functional genomic analysis of prokaryotic nickel and cobalt uptake transporters: evidence for a novel group of ATP-binding cassette transporters.</title>
        <authorList>
            <person name="Rodionov D.A."/>
            <person name="Hebbeln P."/>
            <person name="Gelfand M.S."/>
            <person name="Eitinger T."/>
        </authorList>
    </citation>
    <scope>FUNCTION IN COBALT TRANSPORT</scope>
    <scope>SUBSTRATES</scope>
    <scope>SUBUNIT</scope>
    <scope>EXPRESSION IN E.COLI</scope>
    <source>
        <strain>ATCC BAA-309 / NBRC 16581 / SB1003</strain>
    </source>
</reference>
<reference key="4">
    <citation type="journal article" date="2010" name="Res. Microbiol.">
        <title>A bipartite S unit of an ECF-type cobalt transporter.</title>
        <authorList>
            <person name="Siche S."/>
            <person name="Neubauer O."/>
            <person name="Hebbeln P."/>
            <person name="Eitinger T."/>
        </authorList>
    </citation>
    <scope>FUNCTION IN COBALT TRANSPORT</scope>
    <scope>SUBUNIT</scope>
    <scope>SUBCELLULAR LOCATION</scope>
    <source>
        <strain>ATCC BAA-309 / NBRC 16581 / SB1003</strain>
    </source>
</reference>
<keyword id="KW-0002">3D-structure</keyword>
<keyword id="KW-0997">Cell inner membrane</keyword>
<keyword id="KW-1003">Cell membrane</keyword>
<keyword id="KW-0169">Cobalamin biosynthesis</keyword>
<keyword id="KW-0170">Cobalt</keyword>
<keyword id="KW-0171">Cobalt transport</keyword>
<keyword id="KW-0406">Ion transport</keyword>
<keyword id="KW-0472">Membrane</keyword>
<keyword id="KW-1185">Reference proteome</keyword>
<keyword id="KW-0812">Transmembrane</keyword>
<keyword id="KW-1133">Transmembrane helix</keyword>
<keyword id="KW-0813">Transport</keyword>